<organism>
    <name type="scientific">Plasmodium falciparum (isolate 3D7)</name>
    <dbReference type="NCBI Taxonomy" id="36329"/>
    <lineage>
        <taxon>Eukaryota</taxon>
        <taxon>Sar</taxon>
        <taxon>Alveolata</taxon>
        <taxon>Apicomplexa</taxon>
        <taxon>Aconoidasida</taxon>
        <taxon>Haemosporida</taxon>
        <taxon>Plasmodiidae</taxon>
        <taxon>Plasmodium</taxon>
        <taxon>Plasmodium (Laverania)</taxon>
    </lineage>
</organism>
<keyword id="KW-0175">Coiled coil</keyword>
<keyword id="KW-0472">Membrane</keyword>
<keyword id="KW-0477">Merozoite</keyword>
<keyword id="KW-1185">Reference proteome</keyword>
<keyword id="KW-0812">Transmembrane</keyword>
<keyword id="KW-1133">Transmembrane helix</keyword>
<sequence length="1560" mass="188237">MEEIENAHYQNLENFNDETSEDVNDTSDDINKNNDDNNKYDDNNVNVLDDKNKLENEEDNNNNDNMMIFSSILRYQRYKTKKGNIYFDFKNTNLSLNEKDMLVQSSNFYHLFDIKSLLCPHIYLNVSSHININISDYKNYLKRILNNDNVLDDKNENVKYSSCQEFIFEAVEQAEHIEVFTKVQIVKKLFLFLNQNVAEKMKNYIDNIPIINSNDYVLVQTNLKNDLLLGYVKGIKYNLFFEILNMKKCFHSFLNENIVIYEINEDKEGYFKTIDGKKYLKEQIVYEKKDLLKNLDFYSMYYCDYYFSSNSIIELEKKNNNNINCVNNNINSVNNNINSVDNNINNVDNNINSVNNNNNISDKITHKFEYNDYNDIHLFFSFNICIKSVKNNLFLHIIYNDNNLKNGDEYLNETFPHYEELNLYNKQFDINKMDKNLFKSNTFFINNLYYHLKCKLLCVFKFINMSDDDFMTDIHISQIKKRRYVNEQDSYMLYTFNIHTLSNEGMVYIFFCNLYISNMFKENNFEIRVHTYLHFQLNKQNSYKKLKLIKYSSKFLYSLCFKEKSDSKKKKKKNDHHERDSDNNNNDSNNNNYYNSNNNSNYCGSNNIIYGHDENFIFNSCDFNTLDQIKSGNYLIKDETINENFIFEVRNYKYTFILISSKCNIIIITLRKKKRKEEYNKKMSKYSSCSLNENVYMEGVEILNYCSSNNKNTNNIICNTIINKYNYEINNNIKNKNKSYILFEIVCFYENGEIQKYIYTCSLKNGNFEFFLNVKEDEKTKSINCKKCFFKPILFPFNEELLNKTKSSNDLVLYNIKLSHFKNLIYIYFQEKKIEGISLTINNECLIINYIKMVSKLLKKILQNLYNSDDIDIVYNFQHNTKNKCNYLSQNVNIPSDNTISNVIKKNEMDNNDIKYNLFTQREVKSSFFEFKYILFGFYDLFLMNQKNYTDLNEKKKEEYKKKNFINCFDSHSHYNFLNIIKEYINYDYIIDKCSYNISNDTQKKKKIKLNFYYFLLIIQYFKNTYTQEKKRSFFYMVYNELLQRDKYLKHFYYTYHEIDRKTNMHLNHNDNNIDTKEAKKNEETELILKNVNFYDNYELINIRKYDVILFCFLFHMYNFCLKQNGLSNDEFNSHITYFLINKKMKKYKKKYRYISKKKIDTNEKNDDNNNINVCDSKNYKGTKNFDDTTNNILNKQNESLDNLKKNMYLSKNNYDNQLSSYKNTKQNKTNINEKYNNNNIIMNYLTWKKCLYYIYKIKKYTRKIETHEGLYISSMLYINIYLCQIFFILLNILRINNTNIYTNIHFDIRKNNLDYFYLLILLNFYSLFYILISDQKYILHEEENDTYISKNIDNKEQMANDKNIISLLSFFNNIYEQNKEGMLKNDQNKNNHNTKTDILYMSSSGMNISINTPFLEKYLILIYNIIKDKINIVKEDNYIMEKLFFKINCMICNKVCVTNIYNNYYICENNHIFNKCMLTFGCIYKNHIILPTIYLLHDINDKLFPINNDHILSYNLQYELDYIYFCSFCYNFITTQNSFYKKFFLFNQCPFCNHELNIL</sequence>
<evidence type="ECO:0000255" key="1"/>
<evidence type="ECO:0000256" key="2">
    <source>
        <dbReference type="SAM" id="MobiDB-lite"/>
    </source>
</evidence>
<evidence type="ECO:0000269" key="3">
    <source>
    </source>
</evidence>
<evidence type="ECO:0000305" key="4"/>
<reference key="1">
    <citation type="journal article" date="2002" name="Nature">
        <title>Genome sequence of the human malaria parasite Plasmodium falciparum.</title>
        <authorList>
            <person name="Gardner M.J."/>
            <person name="Hall N."/>
            <person name="Fung E."/>
            <person name="White O."/>
            <person name="Berriman M."/>
            <person name="Hyman R.W."/>
            <person name="Carlton J.M."/>
            <person name="Pain A."/>
            <person name="Nelson K.E."/>
            <person name="Bowman S."/>
            <person name="Paulsen I.T."/>
            <person name="James K.D."/>
            <person name="Eisen J.A."/>
            <person name="Rutherford K.M."/>
            <person name="Salzberg S.L."/>
            <person name="Craig A."/>
            <person name="Kyes S."/>
            <person name="Chan M.-S."/>
            <person name="Nene V."/>
            <person name="Shallom S.J."/>
            <person name="Suh B."/>
            <person name="Peterson J."/>
            <person name="Angiuoli S."/>
            <person name="Pertea M."/>
            <person name="Allen J."/>
            <person name="Selengut J."/>
            <person name="Haft D."/>
            <person name="Mather M.W."/>
            <person name="Vaidya A.B."/>
            <person name="Martin D.M.A."/>
            <person name="Fairlamb A.H."/>
            <person name="Fraunholz M.J."/>
            <person name="Roos D.S."/>
            <person name="Ralph S.A."/>
            <person name="McFadden G.I."/>
            <person name="Cummings L.M."/>
            <person name="Subramanian G.M."/>
            <person name="Mungall C."/>
            <person name="Venter J.C."/>
            <person name="Carucci D.J."/>
            <person name="Hoffman S.L."/>
            <person name="Newbold C."/>
            <person name="Davis R.W."/>
            <person name="Fraser C.M."/>
            <person name="Barrell B.G."/>
        </authorList>
    </citation>
    <scope>NUCLEOTIDE SEQUENCE [LARGE SCALE GENOMIC DNA]</scope>
    <source>
        <strain>3D7</strain>
    </source>
</reference>
<reference evidence="4" key="2">
    <citation type="journal article" date="2007" name="PLoS ONE">
        <title>Rapid identification of malaria vaccine candidates based on alpha-helical coiled coil protein motif.</title>
        <authorList>
            <person name="Villard V."/>
            <person name="Agak G.W."/>
            <person name="Frank G."/>
            <person name="Jafarshad A."/>
            <person name="Servis C."/>
            <person name="Nebie I."/>
            <person name="Sirima S.B."/>
            <person name="Felger I."/>
            <person name="Arevalo-Herrera M."/>
            <person name="Herrera S."/>
            <person name="Heitz F."/>
            <person name="Baecker V."/>
            <person name="Druilhe P."/>
            <person name="Kajava A.V."/>
            <person name="Corradin G."/>
        </authorList>
    </citation>
    <scope>SYNTHESIS OF 329-355</scope>
    <scope>DEVELOPMENTAL STAGE</scope>
    <scope>POSSIBLE CANDIDATE MALARIA EPITOPE</scope>
</reference>
<name>YL135_PLAF7</name>
<proteinExistence type="evidence at protein level"/>
<protein>
    <recommendedName>
        <fullName>Uncharacterized protein PF3D7_1223600</fullName>
    </recommendedName>
</protein>
<gene>
    <name type="ORF">PF3D7_1223600</name>
    <name type="ORF">PFL1135c</name>
</gene>
<feature type="chain" id="PRO_0000356834" description="Uncharacterized protein PF3D7_1223600">
    <location>
        <begin position="1"/>
        <end position="1560"/>
    </location>
</feature>
<feature type="transmembrane region" description="Helical" evidence="1">
    <location>
        <begin position="1271"/>
        <end position="1291"/>
    </location>
</feature>
<feature type="transmembrane region" description="Helical" evidence="1">
    <location>
        <begin position="1314"/>
        <end position="1334"/>
    </location>
</feature>
<feature type="region of interest" description="Disordered" evidence="2">
    <location>
        <begin position="1"/>
        <end position="46"/>
    </location>
</feature>
<feature type="region of interest" description="Disordered" evidence="2">
    <location>
        <begin position="568"/>
        <end position="594"/>
    </location>
</feature>
<feature type="coiled-coil region" evidence="1">
    <location>
        <begin position="36"/>
        <end position="60"/>
    </location>
</feature>
<feature type="coiled-coil region" evidence="1">
    <location>
        <begin position="317"/>
        <end position="359"/>
    </location>
</feature>
<feature type="coiled-coil region" evidence="1">
    <location>
        <begin position="1188"/>
        <end position="1239"/>
    </location>
</feature>
<feature type="compositionally biased region" description="Acidic residues" evidence="2">
    <location>
        <begin position="15"/>
        <end position="28"/>
    </location>
</feature>
<feature type="compositionally biased region" description="Basic and acidic residues" evidence="2">
    <location>
        <begin position="29"/>
        <end position="46"/>
    </location>
</feature>
<feature type="compositionally biased region" description="Low complexity" evidence="2">
    <location>
        <begin position="583"/>
        <end position="594"/>
    </location>
</feature>
<accession>Q8I5I1</accession>
<accession>A0A143ZZX1</accession>
<comment type="subcellular location">
    <subcellularLocation>
        <location evidence="1">Membrane</location>
        <topology evidence="1">Multi-pass membrane protein</topology>
    </subcellularLocation>
</comment>
<comment type="developmental stage">
    <text evidence="3">Expressed during the asexual cell-cycle on the cell surface of the host erythrocytes.</text>
</comment>
<comment type="biotechnology">
    <text evidence="3">Possible candidate for an effective malaria vaccine as determined by epitope response in sera.</text>
</comment>
<dbReference type="EMBL" id="LN999947">
    <property type="protein sequence ID" value="CZT99395.1"/>
    <property type="molecule type" value="Genomic_DNA"/>
</dbReference>
<dbReference type="RefSeq" id="XP_001350633.1">
    <property type="nucleotide sequence ID" value="XM_001350597.1"/>
</dbReference>
<dbReference type="PaxDb" id="5833-PFL1135c"/>
<dbReference type="EnsemblProtists" id="CZT99395">
    <property type="protein sequence ID" value="CZT99395"/>
    <property type="gene ID" value="PF3D7_1223600"/>
</dbReference>
<dbReference type="GeneID" id="811279"/>
<dbReference type="KEGG" id="pfa:PF3D7_1223600"/>
<dbReference type="VEuPathDB" id="PlasmoDB:PF3D7_1223600"/>
<dbReference type="HOGENOM" id="CLU_251252_0_0_1"/>
<dbReference type="InParanoid" id="Q8I5I1"/>
<dbReference type="OMA" id="YFDFNQT"/>
<dbReference type="OrthoDB" id="371788at2759"/>
<dbReference type="PhylomeDB" id="Q8I5I1"/>
<dbReference type="Proteomes" id="UP000001450">
    <property type="component" value="Chromosome 12"/>
</dbReference>
<dbReference type="GO" id="GO:0016020">
    <property type="term" value="C:membrane"/>
    <property type="evidence" value="ECO:0007669"/>
    <property type="project" value="UniProtKB-SubCell"/>
</dbReference>